<feature type="chain" id="PRO_0000349961" description="Ribosomal RNA large subunit methyltransferase F">
    <location>
        <begin position="1"/>
        <end position="404"/>
    </location>
</feature>
<feature type="region of interest" description="Disordered" evidence="2">
    <location>
        <begin position="1"/>
        <end position="54"/>
    </location>
</feature>
<feature type="region of interest" description="Disordered" evidence="2">
    <location>
        <begin position="156"/>
        <end position="177"/>
    </location>
</feature>
<feature type="region of interest" description="Disordered" evidence="2">
    <location>
        <begin position="289"/>
        <end position="308"/>
    </location>
</feature>
<feature type="compositionally biased region" description="Basic residues" evidence="2">
    <location>
        <begin position="1"/>
        <end position="10"/>
    </location>
</feature>
<feature type="compositionally biased region" description="Basic residues" evidence="2">
    <location>
        <begin position="18"/>
        <end position="29"/>
    </location>
</feature>
<feature type="compositionally biased region" description="Basic and acidic residues" evidence="2">
    <location>
        <begin position="30"/>
        <end position="54"/>
    </location>
</feature>
<feature type="compositionally biased region" description="Polar residues" evidence="2">
    <location>
        <begin position="157"/>
        <end position="172"/>
    </location>
</feature>
<gene>
    <name evidence="1" type="primary">rlmF</name>
    <name type="ordered locus">Ssed_4429</name>
</gene>
<comment type="function">
    <text evidence="1">Specifically methylates the adenine in position 1618 of 23S rRNA.</text>
</comment>
<comment type="catalytic activity">
    <reaction evidence="1">
        <text>adenosine(1618) in 23S rRNA + S-adenosyl-L-methionine = N(6)-methyladenosine(1618) in 23S rRNA + S-adenosyl-L-homocysteine + H(+)</text>
        <dbReference type="Rhea" id="RHEA:16497"/>
        <dbReference type="Rhea" id="RHEA-COMP:10229"/>
        <dbReference type="Rhea" id="RHEA-COMP:10231"/>
        <dbReference type="ChEBI" id="CHEBI:15378"/>
        <dbReference type="ChEBI" id="CHEBI:57856"/>
        <dbReference type="ChEBI" id="CHEBI:59789"/>
        <dbReference type="ChEBI" id="CHEBI:74411"/>
        <dbReference type="ChEBI" id="CHEBI:74449"/>
        <dbReference type="EC" id="2.1.1.181"/>
    </reaction>
</comment>
<comment type="subcellular location">
    <subcellularLocation>
        <location evidence="1">Cytoplasm</location>
    </subcellularLocation>
</comment>
<comment type="similarity">
    <text evidence="1">Belongs to the methyltransferase superfamily. METTL16/RlmF family.</text>
</comment>
<proteinExistence type="inferred from homology"/>
<protein>
    <recommendedName>
        <fullName evidence="1">Ribosomal RNA large subunit methyltransferase F</fullName>
        <ecNumber evidence="1">2.1.1.181</ecNumber>
    </recommendedName>
    <alternativeName>
        <fullName evidence="1">23S rRNA mA1618 methyltransferase</fullName>
    </alternativeName>
    <alternativeName>
        <fullName evidence="1">rRNA adenine N-6-methyltransferase</fullName>
    </alternativeName>
</protein>
<organism>
    <name type="scientific">Shewanella sediminis (strain HAW-EB3)</name>
    <dbReference type="NCBI Taxonomy" id="425104"/>
    <lineage>
        <taxon>Bacteria</taxon>
        <taxon>Pseudomonadati</taxon>
        <taxon>Pseudomonadota</taxon>
        <taxon>Gammaproteobacteria</taxon>
        <taxon>Alteromonadales</taxon>
        <taxon>Shewanellaceae</taxon>
        <taxon>Shewanella</taxon>
    </lineage>
</organism>
<reference key="1">
    <citation type="submission" date="2007-08" db="EMBL/GenBank/DDBJ databases">
        <title>Complete sequence of Shewanella sediminis HAW-EB3.</title>
        <authorList>
            <consortium name="US DOE Joint Genome Institute"/>
            <person name="Copeland A."/>
            <person name="Lucas S."/>
            <person name="Lapidus A."/>
            <person name="Barry K."/>
            <person name="Glavina del Rio T."/>
            <person name="Dalin E."/>
            <person name="Tice H."/>
            <person name="Pitluck S."/>
            <person name="Chertkov O."/>
            <person name="Brettin T."/>
            <person name="Bruce D."/>
            <person name="Detter J.C."/>
            <person name="Han C."/>
            <person name="Schmutz J."/>
            <person name="Larimer F."/>
            <person name="Land M."/>
            <person name="Hauser L."/>
            <person name="Kyrpides N."/>
            <person name="Kim E."/>
            <person name="Zhao J.-S."/>
            <person name="Richardson P."/>
        </authorList>
    </citation>
    <scope>NUCLEOTIDE SEQUENCE [LARGE SCALE GENOMIC DNA]</scope>
    <source>
        <strain>HAW-EB3</strain>
    </source>
</reference>
<evidence type="ECO:0000255" key="1">
    <source>
        <dbReference type="HAMAP-Rule" id="MF_01848"/>
    </source>
</evidence>
<evidence type="ECO:0000256" key="2">
    <source>
        <dbReference type="SAM" id="MobiDB-lite"/>
    </source>
</evidence>
<accession>A8G1Q8</accession>
<name>RLMF_SHESH</name>
<dbReference type="EC" id="2.1.1.181" evidence="1"/>
<dbReference type="EMBL" id="CP000821">
    <property type="protein sequence ID" value="ABV39031.1"/>
    <property type="molecule type" value="Genomic_DNA"/>
</dbReference>
<dbReference type="RefSeq" id="WP_012144758.1">
    <property type="nucleotide sequence ID" value="NC_009831.1"/>
</dbReference>
<dbReference type="SMR" id="A8G1Q8"/>
<dbReference type="STRING" id="425104.Ssed_4429"/>
<dbReference type="KEGG" id="sse:Ssed_4429"/>
<dbReference type="eggNOG" id="COG3129">
    <property type="taxonomic scope" value="Bacteria"/>
</dbReference>
<dbReference type="HOGENOM" id="CLU_027534_3_0_6"/>
<dbReference type="OrthoDB" id="1115728at2"/>
<dbReference type="Proteomes" id="UP000002015">
    <property type="component" value="Chromosome"/>
</dbReference>
<dbReference type="GO" id="GO:0005737">
    <property type="term" value="C:cytoplasm"/>
    <property type="evidence" value="ECO:0007669"/>
    <property type="project" value="UniProtKB-SubCell"/>
</dbReference>
<dbReference type="GO" id="GO:0052907">
    <property type="term" value="F:23S rRNA (adenine(1618)-N(6))-methyltransferase activity"/>
    <property type="evidence" value="ECO:0007669"/>
    <property type="project" value="UniProtKB-EC"/>
</dbReference>
<dbReference type="GO" id="GO:0070475">
    <property type="term" value="P:rRNA base methylation"/>
    <property type="evidence" value="ECO:0007669"/>
    <property type="project" value="TreeGrafter"/>
</dbReference>
<dbReference type="CDD" id="cd02440">
    <property type="entry name" value="AdoMet_MTases"/>
    <property type="match status" value="1"/>
</dbReference>
<dbReference type="Gene3D" id="3.40.50.150">
    <property type="entry name" value="Vaccinia Virus protein VP39"/>
    <property type="match status" value="1"/>
</dbReference>
<dbReference type="HAMAP" id="MF_01848">
    <property type="entry name" value="23SrRNA_methyltr_F"/>
    <property type="match status" value="1"/>
</dbReference>
<dbReference type="InterPro" id="IPR010286">
    <property type="entry name" value="METTL16/RlmF"/>
</dbReference>
<dbReference type="InterPro" id="IPR016909">
    <property type="entry name" value="rRNA_lsu_MeTfrase_F"/>
</dbReference>
<dbReference type="InterPro" id="IPR029063">
    <property type="entry name" value="SAM-dependent_MTases_sf"/>
</dbReference>
<dbReference type="NCBIfam" id="NF008725">
    <property type="entry name" value="PRK11727.1"/>
    <property type="match status" value="1"/>
</dbReference>
<dbReference type="PANTHER" id="PTHR13393:SF0">
    <property type="entry name" value="RNA N6-ADENOSINE-METHYLTRANSFERASE METTL16"/>
    <property type="match status" value="1"/>
</dbReference>
<dbReference type="PANTHER" id="PTHR13393">
    <property type="entry name" value="SAM-DEPENDENT METHYLTRANSFERASE"/>
    <property type="match status" value="1"/>
</dbReference>
<dbReference type="Pfam" id="PF05971">
    <property type="entry name" value="Methyltransf_10"/>
    <property type="match status" value="2"/>
</dbReference>
<dbReference type="PIRSF" id="PIRSF029038">
    <property type="entry name" value="Mtase_YbiN_prd"/>
    <property type="match status" value="1"/>
</dbReference>
<dbReference type="SUPFAM" id="SSF53335">
    <property type="entry name" value="S-adenosyl-L-methionine-dependent methyltransferases"/>
    <property type="match status" value="1"/>
</dbReference>
<keyword id="KW-0963">Cytoplasm</keyword>
<keyword id="KW-0489">Methyltransferase</keyword>
<keyword id="KW-1185">Reference proteome</keyword>
<keyword id="KW-0698">rRNA processing</keyword>
<keyword id="KW-0949">S-adenosyl-L-methionine</keyword>
<keyword id="KW-0808">Transferase</keyword>
<sequence length="404" mass="45236">MTKHSQKQNRQKQTTQKQTRRKKPAGKLKAKSEAKLDTRGKPETTEKKGLHERNLHRDGYDFEQLIEASPALKPYVRPNPYGNLSIDFADPLAVKALNLALLQLHYRIEYWDIPAGFLCPPIPGRVDYLHYIADLLAGIDSDTVGDKAEEQVEEIGTRQNVPYASKPESSAPKQRYKSQKRMKINALDIGTGANGIYPILGIQAYGWRFVASDVDPLSIENVNRIVGQNKALQGKLKTRLQTDHQKVFHGIIQADDRFDITLCNPPFHASLSEASEGSLRKVKNLAANRAAKGHKPEPAASKAKPDANELNFGGQKAELWCEGGEKQFLANMIRESKDFATQCLWFTSLVSKKENLQPCYAALEKVGAVTVKTIDMAQGNKLTRVLAWSYLTPKQQALWAKYRS</sequence>